<gene>
    <name type="primary">38</name>
</gene>
<organismHost>
    <name type="scientific">Equus caballus</name>
    <name type="common">Horse</name>
    <dbReference type="NCBI Taxonomy" id="9796"/>
</organismHost>
<name>CEP3_EHV2</name>
<protein>
    <recommendedName>
        <fullName evidence="1">Cytoplasmic envelopment protein 3</fullName>
    </recommendedName>
</protein>
<feature type="initiator methionine" description="Removed; by host" evidence="1">
    <location>
        <position position="1"/>
    </location>
</feature>
<feature type="chain" id="PRO_0000406061" description="Cytoplasmic envelopment protein 3" evidence="1">
    <location>
        <begin position="2"/>
        <end position="91"/>
    </location>
</feature>
<feature type="region of interest" description="Disordered" evidence="2">
    <location>
        <begin position="48"/>
        <end position="81"/>
    </location>
</feature>
<feature type="compositionally biased region" description="Acidic residues" evidence="2">
    <location>
        <begin position="52"/>
        <end position="62"/>
    </location>
</feature>
<feature type="lipid moiety-binding region" description="N-myristoyl glycine; by host" evidence="1">
    <location>
        <position position="2"/>
    </location>
</feature>
<reference key="1">
    <citation type="journal article" date="1995" name="J. Mol. Biol.">
        <title>The DNA sequence of equine herpesvirus 2.</title>
        <authorList>
            <person name="Telford E.A.R."/>
            <person name="Watson M.S."/>
            <person name="Aird H.C."/>
            <person name="Perry J."/>
            <person name="Davison A.J."/>
        </authorList>
    </citation>
    <scope>NUCLEOTIDE SEQUENCE [LARGE SCALE GENOMIC DNA]</scope>
</reference>
<keyword id="KW-1032">Host cell membrane</keyword>
<keyword id="KW-1040">Host Golgi apparatus</keyword>
<keyword id="KW-1043">Host membrane</keyword>
<keyword id="KW-0449">Lipoprotein</keyword>
<keyword id="KW-0472">Membrane</keyword>
<keyword id="KW-0519">Myristate</keyword>
<keyword id="KW-0564">Palmitate</keyword>
<keyword id="KW-0597">Phosphoprotein</keyword>
<keyword id="KW-1185">Reference proteome</keyword>
<keyword id="KW-0946">Virion</keyword>
<keyword id="KW-0920">Virion tegument</keyword>
<accession>Q66642</accession>
<proteinExistence type="inferred from homology"/>
<dbReference type="EMBL" id="U20824">
    <property type="protein sequence ID" value="AAC13826.1"/>
    <property type="molecule type" value="Genomic_DNA"/>
</dbReference>
<dbReference type="PIR" id="S55633">
    <property type="entry name" value="S55633"/>
</dbReference>
<dbReference type="KEGG" id="vg:1461043"/>
<dbReference type="Proteomes" id="UP000007083">
    <property type="component" value="Segment"/>
</dbReference>
<dbReference type="GO" id="GO:0044178">
    <property type="term" value="C:host cell Golgi membrane"/>
    <property type="evidence" value="ECO:0007669"/>
    <property type="project" value="UniProtKB-SubCell"/>
</dbReference>
<dbReference type="GO" id="GO:0020002">
    <property type="term" value="C:host cell plasma membrane"/>
    <property type="evidence" value="ECO:0007669"/>
    <property type="project" value="UniProtKB-SubCell"/>
</dbReference>
<dbReference type="GO" id="GO:0016020">
    <property type="term" value="C:membrane"/>
    <property type="evidence" value="ECO:0007669"/>
    <property type="project" value="UniProtKB-KW"/>
</dbReference>
<dbReference type="GO" id="GO:0019033">
    <property type="term" value="C:viral tegument"/>
    <property type="evidence" value="ECO:0007669"/>
    <property type="project" value="UniProtKB-SubCell"/>
</dbReference>
<dbReference type="GO" id="GO:0055036">
    <property type="term" value="C:virion membrane"/>
    <property type="evidence" value="ECO:0007669"/>
    <property type="project" value="UniProtKB-SubCell"/>
</dbReference>
<dbReference type="GO" id="GO:0046760">
    <property type="term" value="P:viral budding from Golgi membrane"/>
    <property type="evidence" value="ECO:0007669"/>
    <property type="project" value="UniProtKB-UniRule"/>
</dbReference>
<dbReference type="HAMAP" id="MF_04042">
    <property type="entry name" value="HSV_CEP3_gammahv"/>
    <property type="match status" value="1"/>
</dbReference>
<dbReference type="InterPro" id="IPR024360">
    <property type="entry name" value="Herpesvirus_CEP3"/>
</dbReference>
<dbReference type="Pfam" id="PF10813">
    <property type="entry name" value="Herpesvir_UL11"/>
    <property type="match status" value="1"/>
</dbReference>
<organism>
    <name type="scientific">Equine herpesvirus 2 (strain 86/87)</name>
    <name type="common">EHV-2</name>
    <dbReference type="NCBI Taxonomy" id="82831"/>
    <lineage>
        <taxon>Viruses</taxon>
        <taxon>Duplodnaviria</taxon>
        <taxon>Heunggongvirae</taxon>
        <taxon>Peploviricota</taxon>
        <taxon>Herviviricetes</taxon>
        <taxon>Herpesvirales</taxon>
        <taxon>Orthoherpesviridae</taxon>
        <taxon>Gammaherpesvirinae</taxon>
        <taxon>Percavirus</taxon>
        <taxon>Percavirus equidgamma2</taxon>
        <taxon>Equid gammaherpesvirus 2</taxon>
    </lineage>
</organism>
<evidence type="ECO:0000255" key="1">
    <source>
        <dbReference type="HAMAP-Rule" id="MF_04042"/>
    </source>
</evidence>
<evidence type="ECO:0000256" key="2">
    <source>
        <dbReference type="SAM" id="MobiDB-lite"/>
    </source>
</evidence>
<sequence>MGILLSICRRRHDPLTDVEGQPINVREEFEMFEEGDEATEACVFLNPNMGTDEYDEEDEGGDGGEGREPQPEVKTTPYPKRKKIKLKADVL</sequence>
<comment type="function">
    <text evidence="1">Plays an important role in the cytoplasmic envelopment of tegument proteins and capsids during the assembly and egress processes. Also participates in viral entry at the fusion step probably by regulating the core fusion machinery.</text>
</comment>
<comment type="subunit">
    <text evidence="1">Interacts with cytoplasmic envelopment protein 2; this interaction is essential for the proper localization of each protein to the assembly complex and thus for the production of infectious virus.</text>
</comment>
<comment type="subcellular location">
    <subcellularLocation>
        <location evidence="1">Virion tegument</location>
    </subcellularLocation>
    <subcellularLocation>
        <location evidence="1">Virion membrane</location>
        <topology evidence="1">Lipid-anchor</topology>
    </subcellularLocation>
    <subcellularLocation>
        <location evidence="1">Host cell membrane</location>
        <topology evidence="1">Lipid-anchor</topology>
        <orientation evidence="1">Cytoplasmic side</orientation>
    </subcellularLocation>
    <subcellularLocation>
        <location evidence="1">Host Golgi apparatus membrane</location>
        <topology evidence="1">Lipid-anchor</topology>
        <orientation evidence="1">Cytoplasmic side</orientation>
    </subcellularLocation>
    <text evidence="1">Virion membrane-associated tegument protein. Associates with host membrane lipids rafts. During virion morphogenesis, this protein probably accumulates in the endosomes and trans-Golgi where secondary envelopment occurs. It is probably transported to the cell surface from where it is endocytosed and directed to the trans-Golgi network (TGN).</text>
</comment>
<comment type="PTM">
    <text evidence="1">Myristoylation and palmitoylation (probably on one or more of the nearby cysteines at the N-terminus) enable membrane-binding and Golgi apparatus-specific targeting and are essential for efficient packaging.</text>
</comment>
<comment type="PTM">
    <text evidence="1">Phosphorylated. Phosphorylation does not seem to be required for recycling to the host Golgi apparatus. Packaging is selective for underphosphorylated forms.</text>
</comment>
<comment type="similarity">
    <text evidence="1">Belongs to the herpesviridae cytoplasmic envelopment protein 3 family.</text>
</comment>